<reference key="1">
    <citation type="submission" date="2007-08" db="EMBL/GenBank/DDBJ databases">
        <authorList>
            <consortium name="The Vibrio harveyi Genome Sequencing Project"/>
            <person name="Bassler B."/>
            <person name="Clifton S.W."/>
            <person name="Fulton L."/>
            <person name="Delehaunty K."/>
            <person name="Fronick C."/>
            <person name="Harrison M."/>
            <person name="Markivic C."/>
            <person name="Fulton R."/>
            <person name="Tin-Wollam A.-M."/>
            <person name="Shah N."/>
            <person name="Pepin K."/>
            <person name="Nash W."/>
            <person name="Thiruvilangam P."/>
            <person name="Bhonagiri V."/>
            <person name="Waters C."/>
            <person name="Tu K.C."/>
            <person name="Irgon J."/>
            <person name="Wilson R.K."/>
        </authorList>
    </citation>
    <scope>NUCLEOTIDE SEQUENCE [LARGE SCALE GENOMIC DNA]</scope>
    <source>
        <strain>ATCC BAA-1116 / BB120</strain>
    </source>
</reference>
<comment type="function">
    <text evidence="1">Reversibly transfers an adenylyl group from ATP to 4'-phosphopantetheine, yielding dephospho-CoA (dPCoA) and pyrophosphate.</text>
</comment>
<comment type="catalytic activity">
    <reaction evidence="1">
        <text>(R)-4'-phosphopantetheine + ATP + H(+) = 3'-dephospho-CoA + diphosphate</text>
        <dbReference type="Rhea" id="RHEA:19801"/>
        <dbReference type="ChEBI" id="CHEBI:15378"/>
        <dbReference type="ChEBI" id="CHEBI:30616"/>
        <dbReference type="ChEBI" id="CHEBI:33019"/>
        <dbReference type="ChEBI" id="CHEBI:57328"/>
        <dbReference type="ChEBI" id="CHEBI:61723"/>
        <dbReference type="EC" id="2.7.7.3"/>
    </reaction>
</comment>
<comment type="cofactor">
    <cofactor evidence="1">
        <name>Mg(2+)</name>
        <dbReference type="ChEBI" id="CHEBI:18420"/>
    </cofactor>
</comment>
<comment type="pathway">
    <text evidence="1">Cofactor biosynthesis; coenzyme A biosynthesis; CoA from (R)-pantothenate: step 4/5.</text>
</comment>
<comment type="subunit">
    <text evidence="1">Homohexamer.</text>
</comment>
<comment type="subcellular location">
    <subcellularLocation>
        <location evidence="1">Cytoplasm</location>
    </subcellularLocation>
</comment>
<comment type="similarity">
    <text evidence="1">Belongs to the bacterial CoaD family.</text>
</comment>
<feature type="chain" id="PRO_1000118087" description="Phosphopantetheine adenylyltransferase">
    <location>
        <begin position="1"/>
        <end position="159"/>
    </location>
</feature>
<feature type="binding site" evidence="1">
    <location>
        <begin position="9"/>
        <end position="10"/>
    </location>
    <ligand>
        <name>ATP</name>
        <dbReference type="ChEBI" id="CHEBI:30616"/>
    </ligand>
</feature>
<feature type="binding site" evidence="1">
    <location>
        <position position="9"/>
    </location>
    <ligand>
        <name>substrate</name>
    </ligand>
</feature>
<feature type="binding site" evidence="1">
    <location>
        <position position="17"/>
    </location>
    <ligand>
        <name>ATP</name>
        <dbReference type="ChEBI" id="CHEBI:30616"/>
    </ligand>
</feature>
<feature type="binding site" evidence="1">
    <location>
        <position position="41"/>
    </location>
    <ligand>
        <name>substrate</name>
    </ligand>
</feature>
<feature type="binding site" evidence="1">
    <location>
        <position position="73"/>
    </location>
    <ligand>
        <name>substrate</name>
    </ligand>
</feature>
<feature type="binding site" evidence="1">
    <location>
        <position position="87"/>
    </location>
    <ligand>
        <name>substrate</name>
    </ligand>
</feature>
<feature type="binding site" evidence="1">
    <location>
        <begin position="88"/>
        <end position="90"/>
    </location>
    <ligand>
        <name>ATP</name>
        <dbReference type="ChEBI" id="CHEBI:30616"/>
    </ligand>
</feature>
<feature type="binding site" evidence="1">
    <location>
        <position position="98"/>
    </location>
    <ligand>
        <name>ATP</name>
        <dbReference type="ChEBI" id="CHEBI:30616"/>
    </ligand>
</feature>
<feature type="binding site" evidence="1">
    <location>
        <begin position="123"/>
        <end position="129"/>
    </location>
    <ligand>
        <name>ATP</name>
        <dbReference type="ChEBI" id="CHEBI:30616"/>
    </ligand>
</feature>
<feature type="site" description="Transition state stabilizer" evidence="1">
    <location>
        <position position="17"/>
    </location>
</feature>
<organism>
    <name type="scientific">Vibrio campbellii (strain ATCC BAA-1116)</name>
    <dbReference type="NCBI Taxonomy" id="2902295"/>
    <lineage>
        <taxon>Bacteria</taxon>
        <taxon>Pseudomonadati</taxon>
        <taxon>Pseudomonadota</taxon>
        <taxon>Gammaproteobacteria</taxon>
        <taxon>Vibrionales</taxon>
        <taxon>Vibrionaceae</taxon>
        <taxon>Vibrio</taxon>
    </lineage>
</organism>
<accession>A7MSN5</accession>
<sequence length="159" mass="17549">MKKVIYPGTFDPITNGHLDIITRAANMFDQIIIGVAASPSKKTLFSLEERVKLVEESTAHLSNVSTAGFSGLLVDFAREQEANVLVRGLRTTVDFEYEFGLTSMYRKLLPGVESVFLTPAEEYAFLSSTIVREVAIHGGDVEQFVPKCVYTAIKTKVAK</sequence>
<dbReference type="EC" id="2.7.7.3" evidence="1"/>
<dbReference type="EMBL" id="CP000789">
    <property type="protein sequence ID" value="ABU69661.1"/>
    <property type="molecule type" value="Genomic_DNA"/>
</dbReference>
<dbReference type="RefSeq" id="WP_012126816.1">
    <property type="nucleotide sequence ID" value="NC_022269.1"/>
</dbReference>
<dbReference type="SMR" id="A7MSN5"/>
<dbReference type="KEGG" id="vha:VIBHAR_00659"/>
<dbReference type="PATRIC" id="fig|338187.25.peg.1956"/>
<dbReference type="UniPathway" id="UPA00241">
    <property type="reaction ID" value="UER00355"/>
</dbReference>
<dbReference type="Proteomes" id="UP000008152">
    <property type="component" value="Chromosome I"/>
</dbReference>
<dbReference type="GO" id="GO:0005737">
    <property type="term" value="C:cytoplasm"/>
    <property type="evidence" value="ECO:0007669"/>
    <property type="project" value="UniProtKB-SubCell"/>
</dbReference>
<dbReference type="GO" id="GO:0005524">
    <property type="term" value="F:ATP binding"/>
    <property type="evidence" value="ECO:0007669"/>
    <property type="project" value="UniProtKB-KW"/>
</dbReference>
<dbReference type="GO" id="GO:0004595">
    <property type="term" value="F:pantetheine-phosphate adenylyltransferase activity"/>
    <property type="evidence" value="ECO:0007669"/>
    <property type="project" value="UniProtKB-UniRule"/>
</dbReference>
<dbReference type="GO" id="GO:0015937">
    <property type="term" value="P:coenzyme A biosynthetic process"/>
    <property type="evidence" value="ECO:0007669"/>
    <property type="project" value="UniProtKB-UniRule"/>
</dbReference>
<dbReference type="CDD" id="cd02163">
    <property type="entry name" value="PPAT"/>
    <property type="match status" value="1"/>
</dbReference>
<dbReference type="FunFam" id="3.40.50.620:FF:000012">
    <property type="entry name" value="Phosphopantetheine adenylyltransferase"/>
    <property type="match status" value="1"/>
</dbReference>
<dbReference type="Gene3D" id="3.40.50.620">
    <property type="entry name" value="HUPs"/>
    <property type="match status" value="1"/>
</dbReference>
<dbReference type="HAMAP" id="MF_00151">
    <property type="entry name" value="PPAT_bact"/>
    <property type="match status" value="1"/>
</dbReference>
<dbReference type="InterPro" id="IPR004821">
    <property type="entry name" value="Cyt_trans-like"/>
</dbReference>
<dbReference type="InterPro" id="IPR001980">
    <property type="entry name" value="PPAT"/>
</dbReference>
<dbReference type="InterPro" id="IPR014729">
    <property type="entry name" value="Rossmann-like_a/b/a_fold"/>
</dbReference>
<dbReference type="NCBIfam" id="TIGR01510">
    <property type="entry name" value="coaD_prev_kdtB"/>
    <property type="match status" value="1"/>
</dbReference>
<dbReference type="NCBIfam" id="TIGR00125">
    <property type="entry name" value="cyt_tran_rel"/>
    <property type="match status" value="1"/>
</dbReference>
<dbReference type="PANTHER" id="PTHR21342">
    <property type="entry name" value="PHOSPHOPANTETHEINE ADENYLYLTRANSFERASE"/>
    <property type="match status" value="1"/>
</dbReference>
<dbReference type="PANTHER" id="PTHR21342:SF1">
    <property type="entry name" value="PHOSPHOPANTETHEINE ADENYLYLTRANSFERASE"/>
    <property type="match status" value="1"/>
</dbReference>
<dbReference type="Pfam" id="PF01467">
    <property type="entry name" value="CTP_transf_like"/>
    <property type="match status" value="1"/>
</dbReference>
<dbReference type="PRINTS" id="PR01020">
    <property type="entry name" value="LPSBIOSNTHSS"/>
</dbReference>
<dbReference type="SUPFAM" id="SSF52374">
    <property type="entry name" value="Nucleotidylyl transferase"/>
    <property type="match status" value="1"/>
</dbReference>
<protein>
    <recommendedName>
        <fullName evidence="1">Phosphopantetheine adenylyltransferase</fullName>
        <ecNumber evidence="1">2.7.7.3</ecNumber>
    </recommendedName>
    <alternativeName>
        <fullName evidence="1">Dephospho-CoA pyrophosphorylase</fullName>
    </alternativeName>
    <alternativeName>
        <fullName evidence="1">Pantetheine-phosphate adenylyltransferase</fullName>
        <shortName evidence="1">PPAT</shortName>
    </alternativeName>
</protein>
<name>COAD_VIBC1</name>
<gene>
    <name evidence="1" type="primary">coaD</name>
    <name type="ordered locus">VIBHAR_00659</name>
</gene>
<keyword id="KW-0067">ATP-binding</keyword>
<keyword id="KW-0173">Coenzyme A biosynthesis</keyword>
<keyword id="KW-0963">Cytoplasm</keyword>
<keyword id="KW-0460">Magnesium</keyword>
<keyword id="KW-0547">Nucleotide-binding</keyword>
<keyword id="KW-0548">Nucleotidyltransferase</keyword>
<keyword id="KW-0808">Transferase</keyword>
<evidence type="ECO:0000255" key="1">
    <source>
        <dbReference type="HAMAP-Rule" id="MF_00151"/>
    </source>
</evidence>
<proteinExistence type="inferred from homology"/>